<keyword id="KW-0025">Alternative splicing</keyword>
<keyword id="KW-0966">Cell projection</keyword>
<keyword id="KW-0969">Cilium</keyword>
<keyword id="KW-0175">Coiled coil</keyword>
<keyword id="KW-0963">Cytoplasm</keyword>
<keyword id="KW-0206">Cytoskeleton</keyword>
<keyword id="KW-0217">Developmental protein</keyword>
<keyword id="KW-0221">Differentiation</keyword>
<keyword id="KW-0282">Flagellum</keyword>
<keyword id="KW-1017">Isopeptide bond</keyword>
<keyword id="KW-0493">Microtubule</keyword>
<keyword id="KW-0597">Phosphoprotein</keyword>
<keyword id="KW-1185">Reference proteome</keyword>
<keyword id="KW-0744">Spermatogenesis</keyword>
<keyword id="KW-0832">Ubl conjugation</keyword>
<feature type="chain" id="PRO_0000299458" description="Outer dense fiber protein 2">
    <location>
        <begin position="1"/>
        <end position="830"/>
    </location>
</feature>
<feature type="region of interest" description="Interaction with BBOF1" evidence="14">
    <location>
        <begin position="537"/>
        <end position="701"/>
    </location>
</feature>
<feature type="coiled-coil region" evidence="4">
    <location>
        <begin position="144"/>
        <end position="217"/>
    </location>
</feature>
<feature type="coiled-coil region" evidence="4">
    <location>
        <begin position="245"/>
        <end position="423"/>
    </location>
</feature>
<feature type="coiled-coil region" evidence="4">
    <location>
        <begin position="461"/>
        <end position="798"/>
    </location>
</feature>
<feature type="modified residue" description="Phosphoserine" evidence="3">
    <location>
        <position position="73"/>
    </location>
</feature>
<feature type="modified residue" description="Phosphoserine" evidence="3">
    <location>
        <position position="74"/>
    </location>
</feature>
<feature type="modified residue" description="Phosphothreonine" evidence="3">
    <location>
        <position position="92"/>
    </location>
</feature>
<feature type="modified residue" description="Phosphoserine; by TSSK4" evidence="8">
    <location>
        <position position="95"/>
    </location>
</feature>
<feature type="modified residue" description="Phosphoserine" evidence="3">
    <location>
        <position position="106"/>
    </location>
</feature>
<feature type="modified residue" description="Phosphoserine" evidence="3">
    <location>
        <position position="109"/>
    </location>
</feature>
<feature type="modified residue" description="Phosphothreonine" evidence="3">
    <location>
        <position position="110"/>
    </location>
</feature>
<feature type="modified residue" description="Phosphoserine" evidence="3">
    <location>
        <position position="115"/>
    </location>
</feature>
<feature type="modified residue" description="Phosphoserine" evidence="3">
    <location>
        <position position="129"/>
    </location>
</feature>
<feature type="modified residue" description="Phosphoserine" evidence="3">
    <location>
        <position position="139"/>
    </location>
</feature>
<feature type="modified residue" description="Phosphothreonine" evidence="2">
    <location>
        <position position="231"/>
    </location>
</feature>
<feature type="modified residue" description="Phosphoserine" evidence="3">
    <location>
        <position position="261"/>
    </location>
</feature>
<feature type="modified residue" description="Phosphoserine" evidence="3">
    <location>
        <position position="632"/>
    </location>
</feature>
<feature type="cross-link" description="Glycyl lysine isopeptide (Lys-Gly) (interchain with G-Cter in SUMO2)" evidence="2">
    <location>
        <position position="138"/>
    </location>
</feature>
<feature type="splice variant" id="VSP_027671" description="In isoform 7." evidence="20">
    <location>
        <begin position="1"/>
        <end position="47"/>
    </location>
</feature>
<feature type="splice variant" id="VSP_027672" description="In isoform 2, isoform 3, isoform 4 and isoform 5." evidence="18 19">
    <original>MSASSSGGSPRFPSCGKNGVTSLTQKKVLRTPCGAPSVTVT</original>
    <variation>MKDRSSTPPLHVHVDENTPVHVHIKKLPKPSAASSQ</variation>
    <location>
        <begin position="1"/>
        <end position="41"/>
    </location>
</feature>
<feature type="splice variant" id="VSP_027673" description="In isoform 2 and isoform 6." evidence="20">
    <location>
        <begin position="65"/>
        <end position="83"/>
    </location>
</feature>
<feature type="splice variant" id="VSP_027674" description="In isoform 4." evidence="19">
    <original>E</original>
    <variation>EK</variation>
    <location>
        <position position="281"/>
    </location>
</feature>
<feature type="splice variant" id="VSP_027675" description="In isoform 5, isoform 6 and isoform 7." evidence="19 20">
    <original>IEHQGDKLEMAREKHQASQK</original>
    <variation>VRDWQKGSHELARAGARLPR</variation>
    <location>
        <begin position="638"/>
        <end position="657"/>
    </location>
</feature>
<feature type="splice variant" id="VSP_027676" description="In isoform 5, isoform 6 and isoform 7." evidence="19 20">
    <location>
        <begin position="658"/>
        <end position="830"/>
    </location>
</feature>
<feature type="sequence conflict" description="In Ref. 2; AAH57001." evidence="21" ref="2">
    <original>L</original>
    <variation>W</variation>
    <location>
        <position position="349"/>
    </location>
</feature>
<name>ODFP2_MOUSE</name>
<reference key="1">
    <citation type="journal article" date="1998" name="Mol. Reprod. Dev.">
        <title>Mouse Odf2 cDNAs consist of evolutionary conserved as well as highly variable sequences and encode outer dense fiber proteins of the sperm tail.</title>
        <authorList>
            <person name="Hoyer-Fender S."/>
            <person name="Petersen C."/>
            <person name="Brohmann H."/>
            <person name="Rhee K."/>
            <person name="Wolgemuth D.J."/>
        </authorList>
    </citation>
    <scope>NUCLEOTIDE SEQUENCE [MRNA] (ISOFORMS 6 AND 7)</scope>
    <scope>TISSUE SPECIFICITY</scope>
    <scope>ALTERNATIVE SPLICING</scope>
    <source>
        <tissue>Sperm</tissue>
    </source>
</reference>
<reference key="2">
    <citation type="journal article" date="2005" name="Science">
        <title>The transcriptional landscape of the mammalian genome.</title>
        <authorList>
            <person name="Carninci P."/>
            <person name="Kasukawa T."/>
            <person name="Katayama S."/>
            <person name="Gough J."/>
            <person name="Frith M.C."/>
            <person name="Maeda N."/>
            <person name="Oyama R."/>
            <person name="Ravasi T."/>
            <person name="Lenhard B."/>
            <person name="Wells C."/>
            <person name="Kodzius R."/>
            <person name="Shimokawa K."/>
            <person name="Bajic V.B."/>
            <person name="Brenner S.E."/>
            <person name="Batalov S."/>
            <person name="Forrest A.R."/>
            <person name="Zavolan M."/>
            <person name="Davis M.J."/>
            <person name="Wilming L.G."/>
            <person name="Aidinis V."/>
            <person name="Allen J.E."/>
            <person name="Ambesi-Impiombato A."/>
            <person name="Apweiler R."/>
            <person name="Aturaliya R.N."/>
            <person name="Bailey T.L."/>
            <person name="Bansal M."/>
            <person name="Baxter L."/>
            <person name="Beisel K.W."/>
            <person name="Bersano T."/>
            <person name="Bono H."/>
            <person name="Chalk A.M."/>
            <person name="Chiu K.P."/>
            <person name="Choudhary V."/>
            <person name="Christoffels A."/>
            <person name="Clutterbuck D.R."/>
            <person name="Crowe M.L."/>
            <person name="Dalla E."/>
            <person name="Dalrymple B.P."/>
            <person name="de Bono B."/>
            <person name="Della Gatta G."/>
            <person name="di Bernardo D."/>
            <person name="Down T."/>
            <person name="Engstrom P."/>
            <person name="Fagiolini M."/>
            <person name="Faulkner G."/>
            <person name="Fletcher C.F."/>
            <person name="Fukushima T."/>
            <person name="Furuno M."/>
            <person name="Futaki S."/>
            <person name="Gariboldi M."/>
            <person name="Georgii-Hemming P."/>
            <person name="Gingeras T.R."/>
            <person name="Gojobori T."/>
            <person name="Green R.E."/>
            <person name="Gustincich S."/>
            <person name="Harbers M."/>
            <person name="Hayashi Y."/>
            <person name="Hensch T.K."/>
            <person name="Hirokawa N."/>
            <person name="Hill D."/>
            <person name="Huminiecki L."/>
            <person name="Iacono M."/>
            <person name="Ikeo K."/>
            <person name="Iwama A."/>
            <person name="Ishikawa T."/>
            <person name="Jakt M."/>
            <person name="Kanapin A."/>
            <person name="Katoh M."/>
            <person name="Kawasawa Y."/>
            <person name="Kelso J."/>
            <person name="Kitamura H."/>
            <person name="Kitano H."/>
            <person name="Kollias G."/>
            <person name="Krishnan S.P."/>
            <person name="Kruger A."/>
            <person name="Kummerfeld S.K."/>
            <person name="Kurochkin I.V."/>
            <person name="Lareau L.F."/>
            <person name="Lazarevic D."/>
            <person name="Lipovich L."/>
            <person name="Liu J."/>
            <person name="Liuni S."/>
            <person name="McWilliam S."/>
            <person name="Madan Babu M."/>
            <person name="Madera M."/>
            <person name="Marchionni L."/>
            <person name="Matsuda H."/>
            <person name="Matsuzawa S."/>
            <person name="Miki H."/>
            <person name="Mignone F."/>
            <person name="Miyake S."/>
            <person name="Morris K."/>
            <person name="Mottagui-Tabar S."/>
            <person name="Mulder N."/>
            <person name="Nakano N."/>
            <person name="Nakauchi H."/>
            <person name="Ng P."/>
            <person name="Nilsson R."/>
            <person name="Nishiguchi S."/>
            <person name="Nishikawa S."/>
            <person name="Nori F."/>
            <person name="Ohara O."/>
            <person name="Okazaki Y."/>
            <person name="Orlando V."/>
            <person name="Pang K.C."/>
            <person name="Pavan W.J."/>
            <person name="Pavesi G."/>
            <person name="Pesole G."/>
            <person name="Petrovsky N."/>
            <person name="Piazza S."/>
            <person name="Reed J."/>
            <person name="Reid J.F."/>
            <person name="Ring B.Z."/>
            <person name="Ringwald M."/>
            <person name="Rost B."/>
            <person name="Ruan Y."/>
            <person name="Salzberg S.L."/>
            <person name="Sandelin A."/>
            <person name="Schneider C."/>
            <person name="Schoenbach C."/>
            <person name="Sekiguchi K."/>
            <person name="Semple C.A."/>
            <person name="Seno S."/>
            <person name="Sessa L."/>
            <person name="Sheng Y."/>
            <person name="Shibata Y."/>
            <person name="Shimada H."/>
            <person name="Shimada K."/>
            <person name="Silva D."/>
            <person name="Sinclair B."/>
            <person name="Sperling S."/>
            <person name="Stupka E."/>
            <person name="Sugiura K."/>
            <person name="Sultana R."/>
            <person name="Takenaka Y."/>
            <person name="Taki K."/>
            <person name="Tammoja K."/>
            <person name="Tan S.L."/>
            <person name="Tang S."/>
            <person name="Taylor M.S."/>
            <person name="Tegner J."/>
            <person name="Teichmann S.A."/>
            <person name="Ueda H.R."/>
            <person name="van Nimwegen E."/>
            <person name="Verardo R."/>
            <person name="Wei C.L."/>
            <person name="Yagi K."/>
            <person name="Yamanishi H."/>
            <person name="Zabarovsky E."/>
            <person name="Zhu S."/>
            <person name="Zimmer A."/>
            <person name="Hide W."/>
            <person name="Bult C."/>
            <person name="Grimmond S.M."/>
            <person name="Teasdale R.D."/>
            <person name="Liu E.T."/>
            <person name="Brusic V."/>
            <person name="Quackenbush J."/>
            <person name="Wahlestedt C."/>
            <person name="Mattick J.S."/>
            <person name="Hume D.A."/>
            <person name="Kai C."/>
            <person name="Sasaki D."/>
            <person name="Tomaru Y."/>
            <person name="Fukuda S."/>
            <person name="Kanamori-Katayama M."/>
            <person name="Suzuki M."/>
            <person name="Aoki J."/>
            <person name="Arakawa T."/>
            <person name="Iida J."/>
            <person name="Imamura K."/>
            <person name="Itoh M."/>
            <person name="Kato T."/>
            <person name="Kawaji H."/>
            <person name="Kawagashira N."/>
            <person name="Kawashima T."/>
            <person name="Kojima M."/>
            <person name="Kondo S."/>
            <person name="Konno H."/>
            <person name="Nakano K."/>
            <person name="Ninomiya N."/>
            <person name="Nishio T."/>
            <person name="Okada M."/>
            <person name="Plessy C."/>
            <person name="Shibata K."/>
            <person name="Shiraki T."/>
            <person name="Suzuki S."/>
            <person name="Tagami M."/>
            <person name="Waki K."/>
            <person name="Watahiki A."/>
            <person name="Okamura-Oho Y."/>
            <person name="Suzuki H."/>
            <person name="Kawai J."/>
            <person name="Hayashizaki Y."/>
        </authorList>
    </citation>
    <scope>NUCLEOTIDE SEQUENCE [LARGE SCALE MRNA] (ISOFORMS 4 AND 5)</scope>
    <source>
        <strain>C57BL/6J</strain>
        <tissue>Spleen</tissue>
    </source>
</reference>
<reference key="3">
    <citation type="journal article" date="2009" name="PLoS Biol.">
        <title>Lineage-specific biology revealed by a finished genome assembly of the mouse.</title>
        <authorList>
            <person name="Church D.M."/>
            <person name="Goodstadt L."/>
            <person name="Hillier L.W."/>
            <person name="Zody M.C."/>
            <person name="Goldstein S."/>
            <person name="She X."/>
            <person name="Bult C.J."/>
            <person name="Agarwala R."/>
            <person name="Cherry J.L."/>
            <person name="DiCuccio M."/>
            <person name="Hlavina W."/>
            <person name="Kapustin Y."/>
            <person name="Meric P."/>
            <person name="Maglott D."/>
            <person name="Birtle Z."/>
            <person name="Marques A.C."/>
            <person name="Graves T."/>
            <person name="Zhou S."/>
            <person name="Teague B."/>
            <person name="Potamousis K."/>
            <person name="Churas C."/>
            <person name="Place M."/>
            <person name="Herschleb J."/>
            <person name="Runnheim R."/>
            <person name="Forrest D."/>
            <person name="Amos-Landgraf J."/>
            <person name="Schwartz D.C."/>
            <person name="Cheng Z."/>
            <person name="Lindblad-Toh K."/>
            <person name="Eichler E.E."/>
            <person name="Ponting C.P."/>
        </authorList>
    </citation>
    <scope>NUCLEOTIDE SEQUENCE [LARGE SCALE GENOMIC DNA]</scope>
    <source>
        <strain>C57BL/6J</strain>
    </source>
</reference>
<reference key="4">
    <citation type="journal article" date="2004" name="Genome Res.">
        <title>The status, quality, and expansion of the NIH full-length cDNA project: the Mammalian Gene Collection (MGC).</title>
        <authorList>
            <consortium name="The MGC Project Team"/>
        </authorList>
    </citation>
    <scope>NUCLEOTIDE SEQUENCE [LARGE SCALE MRNA] (ISOFORM 3)</scope>
    <source>
        <strain>C57BL/6J</strain>
        <tissue>Brain</tissue>
    </source>
</reference>
<reference key="5">
    <citation type="journal article" date="1997" name="J. Biol. Chem.">
        <title>Interactional cloning of the 84-kDa major outer dense fiber protein Odf84. Leucine zippers mediate associations of Odf84 and Odf27.</title>
        <authorList>
            <person name="Shao X."/>
            <person name="Tarnasky H.A."/>
            <person name="Schalles U."/>
            <person name="Oko R."/>
            <person name="van der Hoorn F.A."/>
        </authorList>
    </citation>
    <scope>TISSUE SPECIFICITY</scope>
    <scope>INTERACTION WITH ODF1</scope>
</reference>
<reference key="6">
    <citation type="journal article" date="2005" name="Nat. Cell Biol.">
        <title>Odf2-deficient mother centrioles lack distal/subdistal appendages and the ability to generate primary cilia.</title>
        <authorList>
            <person name="Ishikawa H."/>
            <person name="Kubo A."/>
            <person name="Tsukita S."/>
            <person name="Tsukita S."/>
        </authorList>
    </citation>
    <scope>FUNCTION</scope>
    <scope>SUBCELLULAR LOCATION</scope>
    <scope>DISRUPTION PHENOTYPE</scope>
</reference>
<reference key="7">
    <citation type="journal article" date="2010" name="Cell">
        <title>A tissue-specific atlas of mouse protein phosphorylation and expression.</title>
        <authorList>
            <person name="Huttlin E.L."/>
            <person name="Jedrychowski M.P."/>
            <person name="Elias J.E."/>
            <person name="Goswami T."/>
            <person name="Rad R."/>
            <person name="Beausoleil S.A."/>
            <person name="Villen J."/>
            <person name="Haas W."/>
            <person name="Sowa M.E."/>
            <person name="Gygi S.P."/>
        </authorList>
    </citation>
    <scope>IDENTIFICATION BY MASS SPECTROMETRY [LARGE SCALE ANALYSIS]</scope>
    <source>
        <tissue>Kidney</tissue>
        <tissue>Lung</tissue>
        <tissue>Spleen</tissue>
        <tissue>Testis</tissue>
    </source>
</reference>
<reference key="8">
    <citation type="journal article" date="2013" name="EMBO J.">
        <title>Kif3a interacts with Dynactin subunit p150 Glued to organize centriole subdistal appendages.</title>
        <authorList>
            <person name="Kodani A."/>
            <person name="Salome Sirerol-Piquer M."/>
            <person name="Seol A."/>
            <person name="Garcia-Verdugo J.M."/>
            <person name="Reiter J.F."/>
        </authorList>
    </citation>
    <scope>SUBCELLULAR LOCATION</scope>
</reference>
<reference evidence="21" key="9">
    <citation type="journal article" date="2015" name="Mol. Hum. Reprod.">
        <title>Tssk4 is essential for maintaining the structural integrity of sperm flagellum.</title>
        <authorList>
            <person name="Wang X."/>
            <person name="Wei Y."/>
            <person name="Fu G."/>
            <person name="Li H."/>
            <person name="Saiyin H."/>
            <person name="Lin G."/>
            <person name="Wang Z."/>
            <person name="Chen S."/>
            <person name="Yu L."/>
        </authorList>
    </citation>
    <scope>INTERACTION WITH TSSK4</scope>
</reference>
<reference key="10">
    <citation type="journal article" date="2016" name="Mol. Biol. Cell">
        <title>Intraflagellar transport protein IFT20 is essential for male fertility and spermiogenesis in mice.</title>
        <authorList>
            <person name="Zhang Z."/>
            <person name="Li W."/>
            <person name="Zhang Y."/>
            <person name="Zhang L."/>
            <person name="Teves M.E."/>
            <person name="Liu H."/>
            <person name="Strauss J.F. III"/>
            <person name="Pazour G.J."/>
            <person name="Foster J.A."/>
            <person name="Hess R.A."/>
            <person name="Zhang Z."/>
        </authorList>
    </citation>
    <scope>SUBCELLULAR LOCATION</scope>
    <scope>TISSUE SPECIFICITY</scope>
</reference>
<reference key="11">
    <citation type="journal article" date="2016" name="Sci. Rep.">
        <title>Testis-specific serine/threonine protein kinase 4 (Tssk4) phosphorylates Odf2 at Ser-76.</title>
        <authorList>
            <person name="Wang X."/>
            <person name="Li H."/>
            <person name="Fu G."/>
            <person name="Wang Y."/>
            <person name="Du S."/>
            <person name="Yu L."/>
            <person name="Wei Y."/>
            <person name="Chen S."/>
        </authorList>
    </citation>
    <scope>IDENTIFICATION BY MASS SPECTROMETRY</scope>
    <scope>INTERACTION WITH TSSK4</scope>
    <scope>PHOSPHORYLATION AT SER-95</scope>
</reference>
<reference key="12">
    <citation type="journal article" date="2019" name="Nature">
        <title>The centrosome protein AKNA regulates neurogenesis via microtubule organization.</title>
        <authorList>
            <person name="Camargo Ortega G."/>
            <person name="Falk S."/>
            <person name="Johansson P.A."/>
            <person name="Peyre E."/>
            <person name="Broix L."/>
            <person name="Sahu S.K."/>
            <person name="Hirst W."/>
            <person name="Schlichthaerle T."/>
            <person name="De Juan Romero C."/>
            <person name="Draganova K."/>
            <person name="Vinopal S."/>
            <person name="Chinnappa K."/>
            <person name="Gavranovic A."/>
            <person name="Karakaya T."/>
            <person name="Steininger T."/>
            <person name="Merl-Pham J."/>
            <person name="Feederle R."/>
            <person name="Shao W."/>
            <person name="Shi S.H."/>
            <person name="Hauck S.M."/>
            <person name="Jungmann R."/>
            <person name="Bradke F."/>
            <person name="Borrell V."/>
            <person name="Geerlof A."/>
            <person name="Reber S."/>
            <person name="Tiwari V.K."/>
            <person name="Huttner W.B."/>
            <person name="Wilsch-Braeuninger M."/>
            <person name="Nguyen L."/>
            <person name="Goetz M."/>
        </authorList>
    </citation>
    <scope>INTERACTION WITH AKNA</scope>
</reference>
<reference key="13">
    <citation type="journal article" date="2020" name="Biosci. Rep.">
        <title>The novel testicular enrichment protein Cfap58 is required for Notch-associated ciliogenesis.</title>
        <authorList>
            <person name="Li Z.Z."/>
            <person name="Zhao W.L."/>
            <person name="Wang G.S."/>
            <person name="Gu N.H."/>
            <person name="Sun F."/>
        </authorList>
    </citation>
    <scope>SUBCELLULAR LOCATION</scope>
    <scope>TISSUE SPECIFICITY</scope>
    <scope>INTERACTION WITH CFAP58</scope>
</reference>
<reference key="14">
    <citation type="journal article" date="2023" name="Cell. Mol. Life Sci.">
        <title>BBOF1 is required for sperm motility and male fertility by stabilizing the flagellar axoneme in mice.</title>
        <authorList>
            <person name="Cao H."/>
            <person name="Xu H."/>
            <person name="Zhou Y."/>
            <person name="Xu W."/>
            <person name="Lu Q."/>
            <person name="Jiang L."/>
            <person name="Rong Y."/>
            <person name="Zhang Q."/>
            <person name="Yu C."/>
        </authorList>
    </citation>
    <scope>SUBCELLULAR LOCATION</scope>
    <scope>INTERACTION WITH BBOF1</scope>
</reference>
<reference key="15">
    <citation type="journal article" date="2019" name="Front. Cell Dev. Biol.">
        <title>CCDC42 Localizes to Manchette, HTCA and Tail and Interacts With ODF1 and ODF2 in the Formation of the Male Germ Cell Cytoskeleton.</title>
        <authorList>
            <person name="Tapia Contreras C."/>
            <person name="Hoyer-Fender S."/>
        </authorList>
    </citation>
    <scope>INTERACTION WITH CCDC42</scope>
</reference>
<reference key="16">
    <citation type="journal article" date="2022" name="Development">
        <title>CCDC38 is required for sperm flagellum biogenesis and male fertility in mice.</title>
        <authorList>
            <person name="Zhang R."/>
            <person name="Wu B."/>
            <person name="Liu C."/>
            <person name="Zhang Z."/>
            <person name="Wang X."/>
            <person name="Wang L."/>
            <person name="Xiao S."/>
            <person name="Chen Y."/>
            <person name="Wei H."/>
            <person name="Jiang H."/>
            <person name="Gao F."/>
            <person name="Yuan L."/>
            <person name="Li W."/>
        </authorList>
    </citation>
    <scope>INTERACTION WITH CCDC38</scope>
    <scope>SUBCELLULAR LOCATION</scope>
</reference>
<reference key="17">
    <citation type="journal article" date="2023" name="Cell. Mol. Life Sci.">
        <title>CCDC146 is required for sperm flagellum biogenesis and male fertility in mice.</title>
        <authorList>
            <person name="Ma Y."/>
            <person name="Wu B."/>
            <person name="Chen Y."/>
            <person name="Ma S."/>
            <person name="Wang L."/>
            <person name="Han T."/>
            <person name="Lin X."/>
            <person name="Yang F."/>
            <person name="Liu C."/>
            <person name="Zhao J."/>
            <person name="Li W."/>
        </authorList>
    </citation>
    <scope>SUBCELLULAR LOCATION</scope>
</reference>
<comment type="function">
    <text evidence="2 5">Seems to be a major component of sperm tail outer dense fibers (ODF). ODFs are filamentous structures located on the outside of the axoneme in the midpiece and principal piece of the mammalian sperm tail and may help to maintain the passive elastic structures and elastic recoil of the sperm tail. May have a modulating influence on sperm motility. Functions as a general scaffold protein that is specifically localized at the distal/subdistal appendages of mother centrioles. Component of the centrosome matrix required for the localization of PLK1 and NIN to the centrosomes. Required for the formation and/or maintenance of normal CETN1 assembly (By similarity).</text>
</comment>
<comment type="subunit">
    <text evidence="2 7 8 10 11 12 13 14 16">Self-associates. Associates with microtubules and forms a fibrillar structure partially linked to the microtubule network. Interacts via its C-terminus with PLK1 (By similarity). Interacts with ODF1 (PubMed:9045620). Interacts with MARK4; the interaction is required for localization of ODF2 to centrioles (By similarity). Interacts with TSSK4 (PubMed:25361759, PubMed:26961893). Interacts with AKNA (PubMed:30787442). Interacts with CFAP58 (PubMed:31904090). Interacts with BBOF1 (PubMed:37198331). Interacts with CCDC38 (PubMed:35587122). Interacts with CCDC42 (PubMed:31475146).</text>
</comment>
<comment type="subcellular location">
    <subcellularLocation>
        <location evidence="5 6 12">Cytoplasm</location>
        <location evidence="5 6 12">Cytoskeleton</location>
        <location evidence="5 6 12">Microtubule organizing center</location>
        <location evidence="5 6 12">Centrosome</location>
    </subcellularLocation>
    <subcellularLocation>
        <location evidence="5">Cell projection</location>
        <location evidence="5">Cilium</location>
    </subcellularLocation>
    <subcellularLocation>
        <location evidence="5">Cytoplasm</location>
        <location evidence="5">Cytoskeleton</location>
        <location evidence="5">Microtubule organizing center</location>
        <location evidence="5">Centrosome</location>
        <location evidence="5">Centriole</location>
    </subcellularLocation>
    <subcellularLocation>
        <location evidence="5">Cytoplasm</location>
        <location evidence="5">Cytoskeleton</location>
        <location evidence="5">Spindle pole</location>
    </subcellularLocation>
    <subcellularLocation>
        <location evidence="9 12 13 14 15">Cell projection</location>
        <location evidence="9 12 13 14 15">Cilium</location>
        <location evidence="9 12 13 14 15">Flagellum</location>
    </subcellularLocation>
    <text evidence="5">Localized at the microtubule organizing centers in interphase and spindle poles in mitosis. Localized at the distal/subdistal appendages of mother centrioles.</text>
</comment>
<comment type="alternative products">
    <event type="alternative splicing"/>
    <isoform>
        <id>A3KGV1-1</id>
        <name>1</name>
        <sequence type="displayed"/>
    </isoform>
    <isoform>
        <id>A3KGV1-2</id>
        <name>2</name>
        <sequence type="described" ref="VSP_027672 VSP_027673"/>
    </isoform>
    <isoform>
        <id>A3KGV1-3</id>
        <name>3</name>
        <sequence type="described" ref="VSP_027672"/>
    </isoform>
    <isoform>
        <id>A3KGV1-4</id>
        <name>4</name>
        <sequence type="described" ref="VSP_027672 VSP_027674"/>
    </isoform>
    <isoform>
        <id>A3KGV1-5</id>
        <name>5</name>
        <sequence type="described" ref="VSP_027672 VSP_027675 VSP_027676"/>
    </isoform>
    <isoform>
        <id>A3KGV1-6</id>
        <name>6</name>
        <name>ODF2/2</name>
        <sequence type="described" ref="VSP_027673 VSP_027675 VSP_027676"/>
    </isoform>
    <isoform>
        <id>A3KGV1-7</id>
        <name>7</name>
        <name>ODF2/1</name>
        <sequence type="described" ref="VSP_027671 VSP_027675 VSP_027676"/>
    </isoform>
</comment>
<comment type="tissue specificity">
    <text evidence="9 12 16 17">Testis-specific (at protein level) (PubMed:27682589, PubMed:31904090, PubMed:9045620). Expressed in spermatids at tubular stage V of the spermatogenic cycle (PubMed:9740324). Highly expressed in the cytoplasm of elongating spermatids (tubular stages X/XI) (PubMed:9740324). In step 14/15 spermatids of tubular stage III/IV low expression detected (PubMed:9740324). No expression detected in other testicular cells as well as the early round of spermatids (PubMed:9740324).</text>
</comment>
<comment type="PTM">
    <text evidence="1 8">Tyrosine phosphorylated (By similarity). Phosphorylated on Ser-95 by TSSK4 (PubMed:26961893).</text>
</comment>
<comment type="disruption phenotype">
    <text evidence="5">Null mutations in F9 embryonic carcinoma cells eliminated distal/subdistal appendages and prevented primary cilium formation. Loss of ODF2 also disrupted two mother centriole-specific NIN dots, while leaving one dot on the proximal end of mother and daughter centrioles.</text>
</comment>
<comment type="similarity">
    <text evidence="21">Belongs to the ODF2 family.</text>
</comment>
<sequence length="830" mass="95541">MSASSSGGSPRFPSCGKNGVTSLTQKKVLRTPCGAPSVTVTKSHKRGMKGDTVNVRRSVRVKTKVPWMPPGKSSARHVGCKWENPPHCLEITPPSSEKLVSVMRLSDLSTEDDDSGHCKMNRYDKKIDSLMNAVGCLKSEVKMQKGERQMAKRFLEERKEELEEVAHELAETEHENTVLRHNIERIKEEKDFTMLQKKHLQQEKECLMSKLVEAEMDGAAAAKQVMALKDTIGKLKTEKQMTCTDINTLTRQKELLLQKLSTFEETNRTLRDLLREQHCKEDSERLMEQQGTLLKRLAEADSEKARLLLLLQDKDKEVEELLQEIQCEKAQAKTASELSKSMESMRGHLQAQLRCKEAENSRLCMQIKNLERSGNQHKAEVEAIMEQLKELKQKGDRDKETLKKAIRAQKERAEKSEEYAEQLHVQLADKDLYVAEALSTLESWRSRYNQVVKDKGDLELEIIVLNDRVTDLVNQQQSLEEKMREDRDSLVERLHRQTAEYSAFKLENERLKASFAPMEDKLNQAHLEVQQLKASVKNYEGMIDNYKSQVMKTRLEADEVAAQLERCDKENKMLKDEMNKEIEAARRQFQSQLADLQQLPDILKITEAKLAECQDQLQGYERKNIDLTAIISDLRSRIEHQGDKLEMAREKHQASQKENKQLSQKVDELERKLEATSAQNVEFLQVIAKREEAIHQAQLRLEEKTRECGSLARQLESAIEDARRQVEQTKEQALSKERAAQSKILDLETQLSRTKTELGQLRRTRDDADRRYQSRLQDLKDRLEQSESTNRSMQNYVQFLKASYANVFGDAPYTSSYLTSSPIRSRSPPA</sequence>
<accession>A3KGV1</accession>
<accession>A3KGV5</accession>
<accession>A3KGV6</accession>
<accession>O35135</accession>
<accession>O35496</accession>
<accession>Q3TH68</accession>
<accession>Q3UP80</accession>
<accession>Q6PGI6</accession>
<evidence type="ECO:0000250" key="1">
    <source>
        <dbReference type="UniProtKB" id="Q2MJU7"/>
    </source>
</evidence>
<evidence type="ECO:0000250" key="2">
    <source>
        <dbReference type="UniProtKB" id="Q5BJF6"/>
    </source>
</evidence>
<evidence type="ECO:0000250" key="3">
    <source>
        <dbReference type="UniProtKB" id="Q6AYX5"/>
    </source>
</evidence>
<evidence type="ECO:0000255" key="4"/>
<evidence type="ECO:0000269" key="5">
    <source>
    </source>
</evidence>
<evidence type="ECO:0000269" key="6">
    <source>
    </source>
</evidence>
<evidence type="ECO:0000269" key="7">
    <source>
    </source>
</evidence>
<evidence type="ECO:0000269" key="8">
    <source>
    </source>
</evidence>
<evidence type="ECO:0000269" key="9">
    <source>
    </source>
</evidence>
<evidence type="ECO:0000269" key="10">
    <source>
    </source>
</evidence>
<evidence type="ECO:0000269" key="11">
    <source>
    </source>
</evidence>
<evidence type="ECO:0000269" key="12">
    <source>
    </source>
</evidence>
<evidence type="ECO:0000269" key="13">
    <source>
    </source>
</evidence>
<evidence type="ECO:0000269" key="14">
    <source>
    </source>
</evidence>
<evidence type="ECO:0000269" key="15">
    <source>
    </source>
</evidence>
<evidence type="ECO:0000269" key="16">
    <source>
    </source>
</evidence>
<evidence type="ECO:0000269" key="17">
    <source>
    </source>
</evidence>
<evidence type="ECO:0000303" key="18">
    <source>
    </source>
</evidence>
<evidence type="ECO:0000303" key="19">
    <source>
    </source>
</evidence>
<evidence type="ECO:0000303" key="20">
    <source>
    </source>
</evidence>
<evidence type="ECO:0000305" key="21"/>
<dbReference type="EMBL" id="AF000968">
    <property type="protein sequence ID" value="AAB65157.1"/>
    <property type="molecule type" value="mRNA"/>
</dbReference>
<dbReference type="EMBL" id="AF034105">
    <property type="protein sequence ID" value="AAB87525.1"/>
    <property type="molecule type" value="mRNA"/>
</dbReference>
<dbReference type="EMBL" id="AK143726">
    <property type="protein sequence ID" value="BAE25517.1"/>
    <property type="molecule type" value="mRNA"/>
</dbReference>
<dbReference type="EMBL" id="AK168415">
    <property type="protein sequence ID" value="BAE40330.1"/>
    <property type="molecule type" value="mRNA"/>
</dbReference>
<dbReference type="EMBL" id="AL928926">
    <property type="status" value="NOT_ANNOTATED_CDS"/>
    <property type="molecule type" value="Genomic_DNA"/>
</dbReference>
<dbReference type="EMBL" id="BC057001">
    <property type="protein sequence ID" value="AAH57001.1"/>
    <property type="molecule type" value="mRNA"/>
</dbReference>
<dbReference type="CCDS" id="CCDS15861.1">
    <molecule id="A3KGV1-6"/>
</dbReference>
<dbReference type="CCDS" id="CCDS50555.1">
    <molecule id="A3KGV1-4"/>
</dbReference>
<dbReference type="CCDS" id="CCDS50556.1">
    <molecule id="A3KGV1-3"/>
</dbReference>
<dbReference type="CCDS" id="CCDS50557.1">
    <molecule id="A3KGV1-5"/>
</dbReference>
<dbReference type="CCDS" id="CCDS89461.1">
    <molecule id="A3KGV1-1"/>
</dbReference>
<dbReference type="CCDS" id="CCDS89462.1">
    <molecule id="A3KGV1-2"/>
</dbReference>
<dbReference type="PIR" id="T02298">
    <property type="entry name" value="T02298"/>
</dbReference>
<dbReference type="PIR" id="T09400">
    <property type="entry name" value="T09400"/>
</dbReference>
<dbReference type="RefSeq" id="NP_001106684.1">
    <molecule id="A3KGV1-3"/>
    <property type="nucleotide sequence ID" value="NM_001113213.2"/>
</dbReference>
<dbReference type="RefSeq" id="NP_001106685.1">
    <molecule id="A3KGV1-5"/>
    <property type="nucleotide sequence ID" value="NM_001113214.2"/>
</dbReference>
<dbReference type="RefSeq" id="NP_001171130.1">
    <molecule id="A3KGV1-4"/>
    <property type="nucleotide sequence ID" value="NM_001177659.2"/>
</dbReference>
<dbReference type="RefSeq" id="NP_001171132.1">
    <property type="nucleotide sequence ID" value="NM_001177661.1"/>
</dbReference>
<dbReference type="RefSeq" id="NP_001342065.1">
    <molecule id="A3KGV1-3"/>
    <property type="nucleotide sequence ID" value="NM_001355136.2"/>
</dbReference>
<dbReference type="RefSeq" id="NP_001342066.1">
    <molecule id="A3KGV1-5"/>
    <property type="nucleotide sequence ID" value="NM_001355137.2"/>
</dbReference>
<dbReference type="RefSeq" id="NP_001355989.1">
    <molecule id="A3KGV1-1"/>
    <property type="nucleotide sequence ID" value="NM_001369060.2"/>
</dbReference>
<dbReference type="RefSeq" id="NP_001361109.1">
    <molecule id="A3KGV1-3"/>
    <property type="nucleotide sequence ID" value="NM_001374180.1"/>
</dbReference>
<dbReference type="RefSeq" id="NP_001361110.1">
    <molecule id="A3KGV1-2"/>
    <property type="nucleotide sequence ID" value="NM_001374181.1"/>
</dbReference>
<dbReference type="RefSeq" id="NP_001361111.1">
    <molecule id="A3KGV1-2"/>
    <property type="nucleotide sequence ID" value="NM_001374182.1"/>
</dbReference>
<dbReference type="RefSeq" id="NP_038643.1">
    <molecule id="A3KGV1-6"/>
    <property type="nucleotide sequence ID" value="NM_013615.4"/>
</dbReference>
<dbReference type="RefSeq" id="XP_017171778.1">
    <property type="nucleotide sequence ID" value="XM_017316289.1"/>
</dbReference>
<dbReference type="RefSeq" id="XP_017171779.1">
    <molecule id="A3KGV1-4"/>
    <property type="nucleotide sequence ID" value="XM_017316290.3"/>
</dbReference>
<dbReference type="RefSeq" id="XP_017171780.1">
    <molecule id="A3KGV1-4"/>
    <property type="nucleotide sequence ID" value="XM_017316291.1"/>
</dbReference>
<dbReference type="RefSeq" id="XP_017171781.1">
    <molecule id="A3KGV1-4"/>
    <property type="nucleotide sequence ID" value="XM_017316292.2"/>
</dbReference>
<dbReference type="RefSeq" id="XP_017171782.1">
    <molecule id="A3KGV1-3"/>
    <property type="nucleotide sequence ID" value="XM_017316293.3"/>
</dbReference>
<dbReference type="RefSeq" id="XP_017171793.1">
    <molecule id="A3KGV1-2"/>
    <property type="nucleotide sequence ID" value="XM_017316304.1"/>
</dbReference>
<dbReference type="RefSeq" id="XP_017171794.1">
    <property type="nucleotide sequence ID" value="XM_017316305.1"/>
</dbReference>
<dbReference type="RefSeq" id="XP_030104169.1">
    <molecule id="A3KGV1-1"/>
    <property type="nucleotide sequence ID" value="XM_030248309.2"/>
</dbReference>
<dbReference type="RefSeq" id="XP_036015301.1">
    <molecule id="A3KGV1-1"/>
    <property type="nucleotide sequence ID" value="XM_036159408.1"/>
</dbReference>
<dbReference type="RefSeq" id="XP_036015305.1">
    <molecule id="A3KGV1-4"/>
    <property type="nucleotide sequence ID" value="XM_036159412.1"/>
</dbReference>
<dbReference type="RefSeq" id="XP_036015320.1">
    <molecule id="A3KGV1-3"/>
    <property type="nucleotide sequence ID" value="XM_036159427.1"/>
</dbReference>
<dbReference type="RefSeq" id="XP_036015321.1">
    <molecule id="A3KGV1-3"/>
    <property type="nucleotide sequence ID" value="XM_036159428.1"/>
</dbReference>
<dbReference type="RefSeq" id="XP_036015333.1">
    <molecule id="A3KGV1-2"/>
    <property type="nucleotide sequence ID" value="XM_036159440.1"/>
</dbReference>
<dbReference type="SMR" id="A3KGV1"/>
<dbReference type="BioGRID" id="201898">
    <property type="interactions" value="141"/>
</dbReference>
<dbReference type="FunCoup" id="A3KGV1">
    <property type="interactions" value="1803"/>
</dbReference>
<dbReference type="IntAct" id="A3KGV1">
    <property type="interactions" value="3"/>
</dbReference>
<dbReference type="STRING" id="10090.ENSMUSP00000109388"/>
<dbReference type="iPTMnet" id="A3KGV1"/>
<dbReference type="PhosphoSitePlus" id="A3KGV1"/>
<dbReference type="SwissPalm" id="A3KGV1"/>
<dbReference type="REPRODUCTION-2DPAGE" id="A3KGV1"/>
<dbReference type="REPRODUCTION-2DPAGE" id="IPI00130958"/>
<dbReference type="jPOST" id="A3KGV1"/>
<dbReference type="PaxDb" id="10090-ENSMUSP00000109388"/>
<dbReference type="PeptideAtlas" id="A3KGV1"/>
<dbReference type="ProteomicsDB" id="293486">
    <molecule id="A3KGV1-1"/>
</dbReference>
<dbReference type="ProteomicsDB" id="293487">
    <molecule id="A3KGV1-2"/>
</dbReference>
<dbReference type="ProteomicsDB" id="293488">
    <molecule id="A3KGV1-3"/>
</dbReference>
<dbReference type="ProteomicsDB" id="293489">
    <molecule id="A3KGV1-4"/>
</dbReference>
<dbReference type="ProteomicsDB" id="293490">
    <molecule id="A3KGV1-5"/>
</dbReference>
<dbReference type="ProteomicsDB" id="293491">
    <molecule id="A3KGV1-6"/>
</dbReference>
<dbReference type="ProteomicsDB" id="293492">
    <molecule id="A3KGV1-7"/>
</dbReference>
<dbReference type="Pumba" id="A3KGV1"/>
<dbReference type="Antibodypedia" id="976">
    <property type="antibodies" value="249 antibodies from 34 providers"/>
</dbReference>
<dbReference type="Ensembl" id="ENSMUST00000028128.13">
    <molecule id="A3KGV1-6"/>
    <property type="protein sequence ID" value="ENSMUSP00000028128.7"/>
    <property type="gene ID" value="ENSMUSG00000026790.20"/>
</dbReference>
<dbReference type="Ensembl" id="ENSMUST00000046571.14">
    <molecule id="A3KGV1-3"/>
    <property type="protein sequence ID" value="ENSMUSP00000049272.8"/>
    <property type="gene ID" value="ENSMUSG00000026790.20"/>
</dbReference>
<dbReference type="Ensembl" id="ENSMUST00000113755.8">
    <molecule id="A3KGV1-5"/>
    <property type="protein sequence ID" value="ENSMUSP00000109384.2"/>
    <property type="gene ID" value="ENSMUSG00000026790.20"/>
</dbReference>
<dbReference type="Ensembl" id="ENSMUST00000113756.8">
    <molecule id="A3KGV1-3"/>
    <property type="protein sequence ID" value="ENSMUSP00000109385.2"/>
    <property type="gene ID" value="ENSMUSG00000026790.20"/>
</dbReference>
<dbReference type="Ensembl" id="ENSMUST00000113757.8">
    <molecule id="A3KGV1-2"/>
    <property type="protein sequence ID" value="ENSMUSP00000109386.2"/>
    <property type="gene ID" value="ENSMUSG00000026790.20"/>
</dbReference>
<dbReference type="Ensembl" id="ENSMUST00000113759.9">
    <molecule id="A3KGV1-4"/>
    <property type="protein sequence ID" value="ENSMUSP00000109388.3"/>
    <property type="gene ID" value="ENSMUSG00000026790.20"/>
</dbReference>
<dbReference type="Ensembl" id="ENSMUST00000113763.8">
    <molecule id="A3KGV1-6"/>
    <property type="protein sequence ID" value="ENSMUSP00000109392.2"/>
    <property type="gene ID" value="ENSMUSG00000026790.20"/>
</dbReference>
<dbReference type="Ensembl" id="ENSMUST00000113764.4">
    <molecule id="A3KGV1-6"/>
    <property type="protein sequence ID" value="ENSMUSP00000109393.4"/>
    <property type="gene ID" value="ENSMUSG00000026790.20"/>
</dbReference>
<dbReference type="Ensembl" id="ENSMUST00000113765.8">
    <molecule id="A3KGV1-1"/>
    <property type="protein sequence ID" value="ENSMUSP00000109394.2"/>
    <property type="gene ID" value="ENSMUSG00000026790.20"/>
</dbReference>
<dbReference type="GeneID" id="18286"/>
<dbReference type="KEGG" id="mmu:18286"/>
<dbReference type="UCSC" id="uc008jaj.2">
    <molecule id="A3KGV1-5"/>
    <property type="organism name" value="mouse"/>
</dbReference>
<dbReference type="UCSC" id="uc008jak.2">
    <molecule id="A3KGV1-3"/>
    <property type="organism name" value="mouse"/>
</dbReference>
<dbReference type="UCSC" id="uc008jam.2">
    <molecule id="A3KGV1-6"/>
    <property type="organism name" value="mouse"/>
</dbReference>
<dbReference type="UCSC" id="uc033hmh.1">
    <molecule id="A3KGV1-4"/>
    <property type="organism name" value="mouse"/>
</dbReference>
<dbReference type="AGR" id="MGI:1098824"/>
<dbReference type="CTD" id="4957"/>
<dbReference type="MGI" id="MGI:1098824">
    <property type="gene designation" value="Odf2"/>
</dbReference>
<dbReference type="VEuPathDB" id="HostDB:ENSMUSG00000026790"/>
<dbReference type="eggNOG" id="ENOG502QUXQ">
    <property type="taxonomic scope" value="Eukaryota"/>
</dbReference>
<dbReference type="GeneTree" id="ENSGT00530000063497"/>
<dbReference type="HOGENOM" id="CLU_018326_0_0_1"/>
<dbReference type="InParanoid" id="A3KGV1"/>
<dbReference type="OMA" id="HVHINDT"/>
<dbReference type="OrthoDB" id="413404at2759"/>
<dbReference type="PhylomeDB" id="A3KGV1"/>
<dbReference type="TreeFam" id="TF328605"/>
<dbReference type="Reactome" id="R-MMU-2565942">
    <property type="pathway name" value="Regulation of PLK1 Activity at G2/M Transition"/>
</dbReference>
<dbReference type="Reactome" id="R-MMU-380259">
    <property type="pathway name" value="Loss of Nlp from mitotic centrosomes"/>
</dbReference>
<dbReference type="Reactome" id="R-MMU-380270">
    <property type="pathway name" value="Recruitment of mitotic centrosome proteins and complexes"/>
</dbReference>
<dbReference type="Reactome" id="R-MMU-380284">
    <property type="pathway name" value="Loss of proteins required for interphase microtubule organization from the centrosome"/>
</dbReference>
<dbReference type="Reactome" id="R-MMU-380320">
    <property type="pathway name" value="Recruitment of NuMA to mitotic centrosomes"/>
</dbReference>
<dbReference type="Reactome" id="R-MMU-5620912">
    <property type="pathway name" value="Anchoring of the basal body to the plasma membrane"/>
</dbReference>
<dbReference type="Reactome" id="R-MMU-8854518">
    <property type="pathway name" value="AURKA Activation by TPX2"/>
</dbReference>
<dbReference type="BioGRID-ORCS" id="18286">
    <property type="hits" value="2 hits in 77 CRISPR screens"/>
</dbReference>
<dbReference type="CD-CODE" id="01CA17F3">
    <property type="entry name" value="Centrosome"/>
</dbReference>
<dbReference type="ChiTaRS" id="Odf2">
    <property type="organism name" value="mouse"/>
</dbReference>
<dbReference type="PRO" id="PR:A3KGV1"/>
<dbReference type="Proteomes" id="UP000000589">
    <property type="component" value="Chromosome 2"/>
</dbReference>
<dbReference type="RNAct" id="A3KGV1">
    <property type="molecule type" value="protein"/>
</dbReference>
<dbReference type="Bgee" id="ENSMUSG00000026790">
    <property type="expression patterns" value="Expressed in seminiferous tubule of testis and 274 other cell types or tissues"/>
</dbReference>
<dbReference type="ExpressionAtlas" id="A3KGV1">
    <property type="expression patterns" value="baseline and differential"/>
</dbReference>
<dbReference type="GO" id="GO:0005814">
    <property type="term" value="C:centriole"/>
    <property type="evidence" value="ECO:0000314"/>
    <property type="project" value="MGI"/>
</dbReference>
<dbReference type="GO" id="GO:0005813">
    <property type="term" value="C:centrosome"/>
    <property type="evidence" value="ECO:0000314"/>
    <property type="project" value="UniProtKB"/>
</dbReference>
<dbReference type="GO" id="GO:0036064">
    <property type="term" value="C:ciliary basal body"/>
    <property type="evidence" value="ECO:0007669"/>
    <property type="project" value="Ensembl"/>
</dbReference>
<dbReference type="GO" id="GO:0097539">
    <property type="term" value="C:ciliary transition fiber"/>
    <property type="evidence" value="ECO:0000314"/>
    <property type="project" value="MGI"/>
</dbReference>
<dbReference type="GO" id="GO:0005929">
    <property type="term" value="C:cilium"/>
    <property type="evidence" value="ECO:0000314"/>
    <property type="project" value="MGI"/>
</dbReference>
<dbReference type="GO" id="GO:0005737">
    <property type="term" value="C:cytoplasm"/>
    <property type="evidence" value="ECO:0007669"/>
    <property type="project" value="UniProtKB-KW"/>
</dbReference>
<dbReference type="GO" id="GO:0043231">
    <property type="term" value="C:intracellular membrane-bounded organelle"/>
    <property type="evidence" value="ECO:0007669"/>
    <property type="project" value="Ensembl"/>
</dbReference>
<dbReference type="GO" id="GO:0005874">
    <property type="term" value="C:microtubule"/>
    <property type="evidence" value="ECO:0007669"/>
    <property type="project" value="UniProtKB-KW"/>
</dbReference>
<dbReference type="GO" id="GO:0036126">
    <property type="term" value="C:sperm flagellum"/>
    <property type="evidence" value="ECO:0000314"/>
    <property type="project" value="UniProtKB"/>
</dbReference>
<dbReference type="GO" id="GO:0097225">
    <property type="term" value="C:sperm midpiece"/>
    <property type="evidence" value="ECO:0000314"/>
    <property type="project" value="UniProtKB"/>
</dbReference>
<dbReference type="GO" id="GO:0097228">
    <property type="term" value="C:sperm principal piece"/>
    <property type="evidence" value="ECO:0000314"/>
    <property type="project" value="UniProtKB"/>
</dbReference>
<dbReference type="GO" id="GO:0000922">
    <property type="term" value="C:spindle pole"/>
    <property type="evidence" value="ECO:0007669"/>
    <property type="project" value="UniProtKB-SubCell"/>
</dbReference>
<dbReference type="GO" id="GO:0005200">
    <property type="term" value="F:structural constituent of cytoskeleton"/>
    <property type="evidence" value="ECO:0000304"/>
    <property type="project" value="MGI"/>
</dbReference>
<dbReference type="GO" id="GO:0030154">
    <property type="term" value="P:cell differentiation"/>
    <property type="evidence" value="ECO:0007669"/>
    <property type="project" value="UniProtKB-KW"/>
</dbReference>
<dbReference type="GO" id="GO:0007283">
    <property type="term" value="P:spermatogenesis"/>
    <property type="evidence" value="ECO:0007669"/>
    <property type="project" value="UniProtKB-KW"/>
</dbReference>
<dbReference type="Gene3D" id="1.20.5.340">
    <property type="match status" value="1"/>
</dbReference>
<dbReference type="InterPro" id="IPR026099">
    <property type="entry name" value="Odf2-rel"/>
</dbReference>
<dbReference type="PANTHER" id="PTHR23162">
    <property type="entry name" value="OUTER DENSE FIBER OF SPERM TAILS 2"/>
    <property type="match status" value="1"/>
</dbReference>
<dbReference type="PANTHER" id="PTHR23162:SF8">
    <property type="entry name" value="OUTER DENSE FIBER PROTEIN 2"/>
    <property type="match status" value="1"/>
</dbReference>
<dbReference type="SUPFAM" id="SSF90257">
    <property type="entry name" value="Myosin rod fragments"/>
    <property type="match status" value="1"/>
</dbReference>
<organism>
    <name type="scientific">Mus musculus</name>
    <name type="common">Mouse</name>
    <dbReference type="NCBI Taxonomy" id="10090"/>
    <lineage>
        <taxon>Eukaryota</taxon>
        <taxon>Metazoa</taxon>
        <taxon>Chordata</taxon>
        <taxon>Craniata</taxon>
        <taxon>Vertebrata</taxon>
        <taxon>Euteleostomi</taxon>
        <taxon>Mammalia</taxon>
        <taxon>Eutheria</taxon>
        <taxon>Euarchontoglires</taxon>
        <taxon>Glires</taxon>
        <taxon>Rodentia</taxon>
        <taxon>Myomorpha</taxon>
        <taxon>Muroidea</taxon>
        <taxon>Muridae</taxon>
        <taxon>Murinae</taxon>
        <taxon>Mus</taxon>
        <taxon>Mus</taxon>
    </lineage>
</organism>
<gene>
    <name type="primary">Odf2</name>
    <name type="synonym">Odf84</name>
</gene>
<protein>
    <recommendedName>
        <fullName>Outer dense fiber protein 2</fullName>
    </recommendedName>
    <alternativeName>
        <fullName>84 kDa outer dense fiber protein</fullName>
    </alternativeName>
    <alternativeName>
        <fullName>Cenexin</fullName>
    </alternativeName>
    <alternativeName>
        <fullName>Outer dense fiber of sperm tails protein 2</fullName>
    </alternativeName>
</protein>
<proteinExistence type="evidence at protein level"/>